<proteinExistence type="inferred from homology"/>
<organism>
    <name type="scientific">Yersinia enterocolitica serotype O:8 / biotype 1B (strain NCTC 13174 / 8081)</name>
    <dbReference type="NCBI Taxonomy" id="393305"/>
    <lineage>
        <taxon>Bacteria</taxon>
        <taxon>Pseudomonadati</taxon>
        <taxon>Pseudomonadota</taxon>
        <taxon>Gammaproteobacteria</taxon>
        <taxon>Enterobacterales</taxon>
        <taxon>Yersiniaceae</taxon>
        <taxon>Yersinia</taxon>
    </lineage>
</organism>
<name>LSRA_YERE8</name>
<gene>
    <name type="primary">lsrA</name>
    <name type="ordered locus">YE0528</name>
</gene>
<protein>
    <recommendedName>
        <fullName evidence="1">Autoinducer 2 import ATP-binding protein LsrA</fullName>
        <shortName evidence="1">AI-2 import ATP-binding protein LsrA</shortName>
        <ecNumber evidence="1">7.6.2.13</ecNumber>
    </recommendedName>
</protein>
<feature type="chain" id="PRO_0000351307" description="Autoinducer 2 import ATP-binding protein LsrA">
    <location>
        <begin position="1"/>
        <end position="527"/>
    </location>
</feature>
<feature type="domain" description="ABC transporter 1" evidence="2">
    <location>
        <begin position="12"/>
        <end position="240"/>
    </location>
</feature>
<feature type="domain" description="ABC transporter 2" evidence="2">
    <location>
        <begin position="266"/>
        <end position="506"/>
    </location>
</feature>
<feature type="binding site" evidence="2">
    <location>
        <begin position="44"/>
        <end position="51"/>
    </location>
    <ligand>
        <name>ATP</name>
        <dbReference type="ChEBI" id="CHEBI:30616"/>
    </ligand>
</feature>
<dbReference type="EC" id="7.6.2.13" evidence="1"/>
<dbReference type="EMBL" id="AM286415">
    <property type="protein sequence ID" value="CAL10646.1"/>
    <property type="molecule type" value="Genomic_DNA"/>
</dbReference>
<dbReference type="RefSeq" id="WP_011815488.1">
    <property type="nucleotide sequence ID" value="NC_008800.1"/>
</dbReference>
<dbReference type="RefSeq" id="YP_001004888.1">
    <property type="nucleotide sequence ID" value="NC_008800.1"/>
</dbReference>
<dbReference type="SMR" id="A1JJ55"/>
<dbReference type="KEGG" id="yen:YE0528"/>
<dbReference type="PATRIC" id="fig|393305.7.peg.618"/>
<dbReference type="eggNOG" id="COG1129">
    <property type="taxonomic scope" value="Bacteria"/>
</dbReference>
<dbReference type="HOGENOM" id="CLU_000604_92_1_6"/>
<dbReference type="OrthoDB" id="9805029at2"/>
<dbReference type="Proteomes" id="UP000000642">
    <property type="component" value="Chromosome"/>
</dbReference>
<dbReference type="GO" id="GO:0005886">
    <property type="term" value="C:plasma membrane"/>
    <property type="evidence" value="ECO:0007669"/>
    <property type="project" value="UniProtKB-SubCell"/>
</dbReference>
<dbReference type="GO" id="GO:0005524">
    <property type="term" value="F:ATP binding"/>
    <property type="evidence" value="ECO:0007669"/>
    <property type="project" value="UniProtKB-KW"/>
</dbReference>
<dbReference type="GO" id="GO:0016887">
    <property type="term" value="F:ATP hydrolysis activity"/>
    <property type="evidence" value="ECO:0007669"/>
    <property type="project" value="InterPro"/>
</dbReference>
<dbReference type="CDD" id="cd03216">
    <property type="entry name" value="ABC_Carb_Monos_I"/>
    <property type="match status" value="1"/>
</dbReference>
<dbReference type="CDD" id="cd03215">
    <property type="entry name" value="ABC_Carb_Monos_II"/>
    <property type="match status" value="1"/>
</dbReference>
<dbReference type="Gene3D" id="3.40.50.300">
    <property type="entry name" value="P-loop containing nucleotide triphosphate hydrolases"/>
    <property type="match status" value="2"/>
</dbReference>
<dbReference type="InterPro" id="IPR003593">
    <property type="entry name" value="AAA+_ATPase"/>
</dbReference>
<dbReference type="InterPro" id="IPR050107">
    <property type="entry name" value="ABC_carbohydrate_import_ATPase"/>
</dbReference>
<dbReference type="InterPro" id="IPR003439">
    <property type="entry name" value="ABC_transporter-like_ATP-bd"/>
</dbReference>
<dbReference type="InterPro" id="IPR017871">
    <property type="entry name" value="ABC_transporter-like_CS"/>
</dbReference>
<dbReference type="InterPro" id="IPR027417">
    <property type="entry name" value="P-loop_NTPase"/>
</dbReference>
<dbReference type="NCBIfam" id="NF011967">
    <property type="entry name" value="PRK15439.1"/>
    <property type="match status" value="1"/>
</dbReference>
<dbReference type="PANTHER" id="PTHR43790:SF2">
    <property type="entry name" value="AUTOINDUCER 2 IMPORT ATP-BINDING PROTEIN LSRA"/>
    <property type="match status" value="1"/>
</dbReference>
<dbReference type="PANTHER" id="PTHR43790">
    <property type="entry name" value="CARBOHYDRATE TRANSPORT ATP-BINDING PROTEIN MG119-RELATED"/>
    <property type="match status" value="1"/>
</dbReference>
<dbReference type="Pfam" id="PF00005">
    <property type="entry name" value="ABC_tran"/>
    <property type="match status" value="2"/>
</dbReference>
<dbReference type="SMART" id="SM00382">
    <property type="entry name" value="AAA"/>
    <property type="match status" value="2"/>
</dbReference>
<dbReference type="SUPFAM" id="SSF52540">
    <property type="entry name" value="P-loop containing nucleoside triphosphate hydrolases"/>
    <property type="match status" value="2"/>
</dbReference>
<dbReference type="PROSITE" id="PS00211">
    <property type="entry name" value="ABC_TRANSPORTER_1"/>
    <property type="match status" value="1"/>
</dbReference>
<dbReference type="PROSITE" id="PS50893">
    <property type="entry name" value="ABC_TRANSPORTER_2"/>
    <property type="match status" value="2"/>
</dbReference>
<evidence type="ECO:0000250" key="1">
    <source>
        <dbReference type="UniProtKB" id="P77257"/>
    </source>
</evidence>
<evidence type="ECO:0000255" key="2">
    <source>
        <dbReference type="PROSITE-ProRule" id="PRU00434"/>
    </source>
</evidence>
<evidence type="ECO:0000305" key="3"/>
<accession>A1JJ55</accession>
<reference key="1">
    <citation type="journal article" date="2006" name="PLoS Genet.">
        <title>The complete genome sequence and comparative genome analysis of the high pathogenicity Yersinia enterocolitica strain 8081.</title>
        <authorList>
            <person name="Thomson N.R."/>
            <person name="Howard S."/>
            <person name="Wren B.W."/>
            <person name="Holden M.T.G."/>
            <person name="Crossman L."/>
            <person name="Challis G.L."/>
            <person name="Churcher C."/>
            <person name="Mungall K."/>
            <person name="Brooks K."/>
            <person name="Chillingworth T."/>
            <person name="Feltwell T."/>
            <person name="Abdellah Z."/>
            <person name="Hauser H."/>
            <person name="Jagels K."/>
            <person name="Maddison M."/>
            <person name="Moule S."/>
            <person name="Sanders M."/>
            <person name="Whitehead S."/>
            <person name="Quail M.A."/>
            <person name="Dougan G."/>
            <person name="Parkhill J."/>
            <person name="Prentice M.B."/>
        </authorList>
    </citation>
    <scope>NUCLEOTIDE SEQUENCE [LARGE SCALE GENOMIC DNA]</scope>
    <source>
        <strain>NCTC 13174 / 8081</strain>
    </source>
</reference>
<sequence>MPHTKASPPPLLQVRGISKQFSGVVVLKSIDFTLQPGQVHALLGGNGAGKSTLMKIIAGVLPPDSGTIEIDGQPCLNLTPAKAHQLGIYLVPQEPMLFANLSVQENILFRLPKHQADKKKMAQLLQSLGCHLDLAVNAGSLDVADQQLVEIMRGLMRDSRILILDEPTASLTPAETNRLFSQIKMLLQQGVGVVFISHKLPEIRQLADWVSVMRDGGIALSGATNDFSTDTIIQAITPQAKNSELTDTQKLWLELPGNRRSQARAQSNQPVIQVCDLSGEGFAHISFEVRAGEILGLAGVVGAGRTELAETLYGLRPVSGGKVMLEECDITAMKTVNRLATGLVYLPEDRQASGLYLDAPLSWNVYSLTQGNQGIWTHPAQEAAILERYRRALNIKFSHLEQPVRTLSGGNQQKLLIAKCLEANPLLLIIDEPTRGVDVSARSDIYQLIRSIAAQHVAIIFISSDLEEVVQMADRVLVMHQGEISGALEGSAMNVDTIMHLAFGEQTAFGEHHTDAHQRAENEGASC</sequence>
<keyword id="KW-0067">ATP-binding</keyword>
<keyword id="KW-0997">Cell inner membrane</keyword>
<keyword id="KW-1003">Cell membrane</keyword>
<keyword id="KW-0472">Membrane</keyword>
<keyword id="KW-0547">Nucleotide-binding</keyword>
<keyword id="KW-0677">Repeat</keyword>
<keyword id="KW-1278">Translocase</keyword>
<keyword id="KW-0813">Transport</keyword>
<comment type="function">
    <text evidence="1">Part of the ABC transporter complex LsrABCD involved in autoinducer 2 (AI-2) import. Responsible for energy coupling to the transport system.</text>
</comment>
<comment type="catalytic activity">
    <reaction evidence="1">
        <text>ATP + H2O + (2R,4S)-2-methyl-2,3,3,4-tetrahydroxytetrahydrofuran-[AI-2-binding protein]Side 1 = ADP + phosphate + (2R,4S)-2-methyl-2,3,3,4-tetrahydroxytetrahydrofuranSide 2 + [AI-2-binding protein]Side 1.</text>
        <dbReference type="EC" id="7.6.2.13"/>
    </reaction>
</comment>
<comment type="subunit">
    <text evidence="1">The complex is composed of two ATP-binding proteins (LsrA), two transmembrane proteins (LsrC and LsrD) and a solute-binding protein (LsrB).</text>
</comment>
<comment type="subcellular location">
    <subcellularLocation>
        <location evidence="1">Cell inner membrane</location>
        <topology evidence="1">Peripheral membrane protein</topology>
    </subcellularLocation>
</comment>
<comment type="similarity">
    <text evidence="3">Belongs to the ABC transporter superfamily. AI-2 autoinducer porter (TC 3.A.1.2.8) family.</text>
</comment>